<organism>
    <name type="scientific">Citrobacter koseri (strain ATCC BAA-895 / CDC 4225-83 / SGSC4696)</name>
    <dbReference type="NCBI Taxonomy" id="290338"/>
    <lineage>
        <taxon>Bacteria</taxon>
        <taxon>Pseudomonadati</taxon>
        <taxon>Pseudomonadota</taxon>
        <taxon>Gammaproteobacteria</taxon>
        <taxon>Enterobacterales</taxon>
        <taxon>Enterobacteriaceae</taxon>
        <taxon>Citrobacter</taxon>
    </lineage>
</organism>
<comment type="function">
    <text evidence="1">NDH-1 shuttles electrons from NADH, via FMN and iron-sulfur (Fe-S) centers, to quinones in the respiratory chain. The immediate electron acceptor for the enzyme in this species is believed to be ubiquinone. Couples the redox reaction to proton translocation (for every two electrons transferred, four hydrogen ions are translocated across the cytoplasmic membrane), and thus conserves the redox energy in a proton gradient.</text>
</comment>
<comment type="catalytic activity">
    <reaction evidence="1">
        <text>a quinone + NADH + 5 H(+)(in) = a quinol + NAD(+) + 4 H(+)(out)</text>
        <dbReference type="Rhea" id="RHEA:57888"/>
        <dbReference type="ChEBI" id="CHEBI:15378"/>
        <dbReference type="ChEBI" id="CHEBI:24646"/>
        <dbReference type="ChEBI" id="CHEBI:57540"/>
        <dbReference type="ChEBI" id="CHEBI:57945"/>
        <dbReference type="ChEBI" id="CHEBI:132124"/>
    </reaction>
</comment>
<comment type="cofactor">
    <cofactor evidence="1">
        <name>[4Fe-4S] cluster</name>
        <dbReference type="ChEBI" id="CHEBI:49883"/>
    </cofactor>
    <text evidence="1">Binds 1 [4Fe-4S] cluster.</text>
</comment>
<comment type="subunit">
    <text evidence="1">NDH-1 is composed of 13 different subunits. Subunits NuoB, CD, E, F, and G constitute the peripheral sector of the complex.</text>
</comment>
<comment type="subcellular location">
    <subcellularLocation>
        <location evidence="1">Cell inner membrane</location>
        <topology evidence="1">Peripheral membrane protein</topology>
        <orientation evidence="1">Cytoplasmic side</orientation>
    </subcellularLocation>
</comment>
<comment type="similarity">
    <text evidence="1">Belongs to the complex I 20 kDa subunit family.</text>
</comment>
<name>NUOB_CITK8</name>
<gene>
    <name evidence="1" type="primary">nuoB</name>
    <name type="ordered locus">CKO_00509</name>
</gene>
<dbReference type="EC" id="7.1.1.-" evidence="1"/>
<dbReference type="EMBL" id="CP000822">
    <property type="protein sequence ID" value="ABV11665.1"/>
    <property type="molecule type" value="Genomic_DNA"/>
</dbReference>
<dbReference type="RefSeq" id="WP_012131491.1">
    <property type="nucleotide sequence ID" value="NC_009792.1"/>
</dbReference>
<dbReference type="SMR" id="A8ADV2"/>
<dbReference type="STRING" id="290338.CKO_00509"/>
<dbReference type="GeneID" id="45134751"/>
<dbReference type="KEGG" id="cko:CKO_00509"/>
<dbReference type="HOGENOM" id="CLU_055737_7_3_6"/>
<dbReference type="OrthoDB" id="9786737at2"/>
<dbReference type="Proteomes" id="UP000008148">
    <property type="component" value="Chromosome"/>
</dbReference>
<dbReference type="GO" id="GO:0005886">
    <property type="term" value="C:plasma membrane"/>
    <property type="evidence" value="ECO:0007669"/>
    <property type="project" value="UniProtKB-SubCell"/>
</dbReference>
<dbReference type="GO" id="GO:0045271">
    <property type="term" value="C:respiratory chain complex I"/>
    <property type="evidence" value="ECO:0007669"/>
    <property type="project" value="TreeGrafter"/>
</dbReference>
<dbReference type="GO" id="GO:0051539">
    <property type="term" value="F:4 iron, 4 sulfur cluster binding"/>
    <property type="evidence" value="ECO:0007669"/>
    <property type="project" value="UniProtKB-KW"/>
</dbReference>
<dbReference type="GO" id="GO:0005506">
    <property type="term" value="F:iron ion binding"/>
    <property type="evidence" value="ECO:0007669"/>
    <property type="project" value="UniProtKB-UniRule"/>
</dbReference>
<dbReference type="GO" id="GO:0008137">
    <property type="term" value="F:NADH dehydrogenase (ubiquinone) activity"/>
    <property type="evidence" value="ECO:0007669"/>
    <property type="project" value="InterPro"/>
</dbReference>
<dbReference type="GO" id="GO:0050136">
    <property type="term" value="F:NADH:ubiquinone reductase (non-electrogenic) activity"/>
    <property type="evidence" value="ECO:0007669"/>
    <property type="project" value="UniProtKB-UniRule"/>
</dbReference>
<dbReference type="GO" id="GO:0048038">
    <property type="term" value="F:quinone binding"/>
    <property type="evidence" value="ECO:0007669"/>
    <property type="project" value="UniProtKB-KW"/>
</dbReference>
<dbReference type="GO" id="GO:0009060">
    <property type="term" value="P:aerobic respiration"/>
    <property type="evidence" value="ECO:0007669"/>
    <property type="project" value="TreeGrafter"/>
</dbReference>
<dbReference type="GO" id="GO:0015990">
    <property type="term" value="P:electron transport coupled proton transport"/>
    <property type="evidence" value="ECO:0007669"/>
    <property type="project" value="TreeGrafter"/>
</dbReference>
<dbReference type="FunFam" id="3.40.50.12280:FF:000002">
    <property type="entry name" value="NADH-quinone oxidoreductase subunit B"/>
    <property type="match status" value="1"/>
</dbReference>
<dbReference type="Gene3D" id="3.40.50.12280">
    <property type="match status" value="1"/>
</dbReference>
<dbReference type="HAMAP" id="MF_01356">
    <property type="entry name" value="NDH1_NuoB"/>
    <property type="match status" value="1"/>
</dbReference>
<dbReference type="InterPro" id="IPR006137">
    <property type="entry name" value="NADH_UbQ_OxRdtase-like_20kDa"/>
</dbReference>
<dbReference type="InterPro" id="IPR006138">
    <property type="entry name" value="NADH_UQ_OxRdtase_20Kd_su"/>
</dbReference>
<dbReference type="NCBIfam" id="TIGR01957">
    <property type="entry name" value="nuoB_fam"/>
    <property type="match status" value="1"/>
</dbReference>
<dbReference type="NCBIfam" id="NF005012">
    <property type="entry name" value="PRK06411.1"/>
    <property type="match status" value="1"/>
</dbReference>
<dbReference type="PANTHER" id="PTHR11995">
    <property type="entry name" value="NADH DEHYDROGENASE"/>
    <property type="match status" value="1"/>
</dbReference>
<dbReference type="PANTHER" id="PTHR11995:SF14">
    <property type="entry name" value="NADH DEHYDROGENASE [UBIQUINONE] IRON-SULFUR PROTEIN 7, MITOCHONDRIAL"/>
    <property type="match status" value="1"/>
</dbReference>
<dbReference type="Pfam" id="PF01058">
    <property type="entry name" value="Oxidored_q6"/>
    <property type="match status" value="1"/>
</dbReference>
<dbReference type="SUPFAM" id="SSF56770">
    <property type="entry name" value="HydA/Nqo6-like"/>
    <property type="match status" value="1"/>
</dbReference>
<dbReference type="PROSITE" id="PS01150">
    <property type="entry name" value="COMPLEX1_20K"/>
    <property type="match status" value="1"/>
</dbReference>
<accession>A8ADV2</accession>
<keyword id="KW-0004">4Fe-4S</keyword>
<keyword id="KW-0997">Cell inner membrane</keyword>
<keyword id="KW-1003">Cell membrane</keyword>
<keyword id="KW-0408">Iron</keyword>
<keyword id="KW-0411">Iron-sulfur</keyword>
<keyword id="KW-0472">Membrane</keyword>
<keyword id="KW-0479">Metal-binding</keyword>
<keyword id="KW-0520">NAD</keyword>
<keyword id="KW-0874">Quinone</keyword>
<keyword id="KW-1185">Reference proteome</keyword>
<keyword id="KW-1278">Translocase</keyword>
<keyword id="KW-0813">Transport</keyword>
<keyword id="KW-0830">Ubiquinone</keyword>
<sequence length="224" mass="25532">MDYTLTRIDPNGENDRYPLQKQEIVTDPLEQEINKSVYMGKLEHALHDMVNWGRKNSIWPYNFGLSCCYVEMVTSFTAVHDVARFGAEVLRASPRQADLMVVAGTCFTKMAPVIQRLYDQMLEPKWVISMGACANSGGMYDIYSVVQGVDKFIPVDVYIPGCPPRPEAYMQALMLLQESIGKERRPLSWVVGDQGVYRANMQSERERKRGERIAVTNLRTPDEI</sequence>
<proteinExistence type="inferred from homology"/>
<protein>
    <recommendedName>
        <fullName evidence="1">NADH-quinone oxidoreductase subunit B</fullName>
        <ecNumber evidence="1">7.1.1.-</ecNumber>
    </recommendedName>
    <alternativeName>
        <fullName evidence="1">NADH dehydrogenase I subunit B</fullName>
    </alternativeName>
    <alternativeName>
        <fullName evidence="1">NDH-1 subunit B</fullName>
    </alternativeName>
</protein>
<evidence type="ECO:0000255" key="1">
    <source>
        <dbReference type="HAMAP-Rule" id="MF_01356"/>
    </source>
</evidence>
<reference key="1">
    <citation type="submission" date="2007-08" db="EMBL/GenBank/DDBJ databases">
        <authorList>
            <consortium name="The Citrobacter koseri Genome Sequencing Project"/>
            <person name="McClelland M."/>
            <person name="Sanderson E.K."/>
            <person name="Porwollik S."/>
            <person name="Spieth J."/>
            <person name="Clifton W.S."/>
            <person name="Latreille P."/>
            <person name="Courtney L."/>
            <person name="Wang C."/>
            <person name="Pepin K."/>
            <person name="Bhonagiri V."/>
            <person name="Nash W."/>
            <person name="Johnson M."/>
            <person name="Thiruvilangam P."/>
            <person name="Wilson R."/>
        </authorList>
    </citation>
    <scope>NUCLEOTIDE SEQUENCE [LARGE SCALE GENOMIC DNA]</scope>
    <source>
        <strain>ATCC BAA-895 / CDC 4225-83 / SGSC4696</strain>
    </source>
</reference>
<feature type="chain" id="PRO_0000376182" description="NADH-quinone oxidoreductase subunit B">
    <location>
        <begin position="1"/>
        <end position="224"/>
    </location>
</feature>
<feature type="binding site" evidence="1">
    <location>
        <position position="67"/>
    </location>
    <ligand>
        <name>[4Fe-4S] cluster</name>
        <dbReference type="ChEBI" id="CHEBI:49883"/>
    </ligand>
</feature>
<feature type="binding site" evidence="1">
    <location>
        <position position="68"/>
    </location>
    <ligand>
        <name>[4Fe-4S] cluster</name>
        <dbReference type="ChEBI" id="CHEBI:49883"/>
    </ligand>
</feature>
<feature type="binding site" evidence="1">
    <location>
        <position position="133"/>
    </location>
    <ligand>
        <name>[4Fe-4S] cluster</name>
        <dbReference type="ChEBI" id="CHEBI:49883"/>
    </ligand>
</feature>
<feature type="binding site" evidence="1">
    <location>
        <position position="162"/>
    </location>
    <ligand>
        <name>[4Fe-4S] cluster</name>
        <dbReference type="ChEBI" id="CHEBI:49883"/>
    </ligand>
</feature>